<organism>
    <name type="scientific">Triticum aestivum</name>
    <name type="common">Wheat</name>
    <dbReference type="NCBI Taxonomy" id="4565"/>
    <lineage>
        <taxon>Eukaryota</taxon>
        <taxon>Viridiplantae</taxon>
        <taxon>Streptophyta</taxon>
        <taxon>Embryophyta</taxon>
        <taxon>Tracheophyta</taxon>
        <taxon>Spermatophyta</taxon>
        <taxon>Magnoliopsida</taxon>
        <taxon>Liliopsida</taxon>
        <taxon>Poales</taxon>
        <taxon>Poaceae</taxon>
        <taxon>BOP clade</taxon>
        <taxon>Pooideae</taxon>
        <taxon>Triticodae</taxon>
        <taxon>Triticeae</taxon>
        <taxon>Triticinae</taxon>
        <taxon>Triticum</taxon>
    </lineage>
</organism>
<reference key="1">
    <citation type="journal article" date="1992" name="Eur. J. Biochem.">
        <title>cDNA and gene sequences of wheat chloroplast sedoheptulose-1,7-bisphosphatase reveal homology with fructose-1,6-bisphosphatases.</title>
        <authorList>
            <person name="Raines C.A."/>
            <person name="Lloyd J.C."/>
            <person name="Willingham N.M."/>
            <person name="Potts S."/>
            <person name="Dyer T.A."/>
        </authorList>
    </citation>
    <scope>NUCLEOTIDE SEQUENCE [GENOMIC DNA]</scope>
    <source>
        <strain>cv. Chinese Spring</strain>
        <tissue>Leaf</tissue>
    </source>
</reference>
<reference key="2">
    <citation type="journal article" date="1993" name="Plant Mol. Biol.">
        <title>A light- and developmentally-regulated DNA-binding interaction is common to the upstream sequences of the wheat Calvin cycle bisphosphatase genes.</title>
        <authorList>
            <person name="Miles A.J."/>
            <person name="Potts S.C."/>
            <person name="Willingham N.M."/>
            <person name="Raines C.A."/>
            <person name="Lloyd J.C."/>
        </authorList>
    </citation>
    <scope>NUCLEOTIDE SEQUENCE [GENOMIC DNA] OF 1-7</scope>
</reference>
<sequence length="393" mass="42061">METVAAAGYAHGAATRSPACCAAMSFSQSYRPKAARPATSFYGESLRANTARTSFPAGRQSKAASRAALTTRCAIGDSLEEFLTKATPDKNLIRLLICMGEAMRTIAFKVRTASCGGTACVNSFGDEQLAVDMLADKLLFEALEYSHVCKYACSEEVPELQDMGGPVEGGFSVAFDPLDGSSIVDTNFTVGTIFGVWPGDKLTGVTGGDQVAAAMGIYGPRTTFVVALKDCPGTHEFLLLDEGKWQHVKDTTSIGEGKMFSPGNLRATFDNPDYDKLVNYYVKEKYTLRYTGGMVPDVNQIIVKEKGIFTNVTSPTAKAKLRLLFEVAPLGFLIEKAGGHSSDGKQSVLDKVISVLDERTQVAYGSKNEIIRFEETLYGSSRLAASATVGATA</sequence>
<proteinExistence type="evidence at transcript level"/>
<keyword id="KW-0113">Calvin cycle</keyword>
<keyword id="KW-0119">Carbohydrate metabolism</keyword>
<keyword id="KW-0150">Chloroplast</keyword>
<keyword id="KW-1015">Disulfide bond</keyword>
<keyword id="KW-0378">Hydrolase</keyword>
<keyword id="KW-0460">Magnesium</keyword>
<keyword id="KW-0479">Metal-binding</keyword>
<keyword id="KW-0934">Plastid</keyword>
<keyword id="KW-1185">Reference proteome</keyword>
<keyword id="KW-0809">Transit peptide</keyword>
<name>S17P_WHEAT</name>
<protein>
    <recommendedName>
        <fullName>Sedoheptulose-1,7-bisphosphatase, chloroplastic</fullName>
        <ecNumber>3.1.3.37</ecNumber>
    </recommendedName>
    <alternativeName>
        <fullName>SED(1,7)P2ase</fullName>
    </alternativeName>
    <alternativeName>
        <fullName>Sedoheptulose bisphosphatase</fullName>
        <shortName>SBPase</shortName>
    </alternativeName>
</protein>
<dbReference type="EC" id="3.1.3.37"/>
<dbReference type="EMBL" id="X65540">
    <property type="protein sequence ID" value="CAA46507.1"/>
    <property type="molecule type" value="Genomic_DNA"/>
</dbReference>
<dbReference type="EMBL" id="S63737">
    <property type="protein sequence ID" value="AAD13943.1"/>
    <property type="molecule type" value="Genomic_DNA"/>
</dbReference>
<dbReference type="PIR" id="S23452">
    <property type="entry name" value="S23452"/>
</dbReference>
<dbReference type="RefSeq" id="NP_001413688.1">
    <property type="nucleotide sequence ID" value="NM_001426759.1"/>
</dbReference>
<dbReference type="SMR" id="P46285"/>
<dbReference type="STRING" id="4565.P46285"/>
<dbReference type="PaxDb" id="4565-Traes_3B_71DAC7F5D.1"/>
<dbReference type="EnsemblPlants" id="TraesARI3A03G01486520.1">
    <property type="protein sequence ID" value="TraesARI3A03G01486520.1"/>
    <property type="gene ID" value="TraesARI3A03G01486520"/>
</dbReference>
<dbReference type="EnsemblPlants" id="TraesCAD_scaffold_001683_01G000100.1">
    <property type="protein sequence ID" value="TraesCAD_scaffold_001683_01G000100.1"/>
    <property type="gene ID" value="TraesCAD_scaffold_001683_01G000100"/>
</dbReference>
<dbReference type="EnsemblPlants" id="TraesCLE_scaffold_029103_01G000100.1">
    <property type="protein sequence ID" value="TraesCLE_scaffold_029103_01G000100.1"/>
    <property type="gene ID" value="TraesCLE_scaffold_029103_01G000100"/>
</dbReference>
<dbReference type="EnsemblPlants" id="TraesCS3A02G367000.1">
    <property type="protein sequence ID" value="TraesCS3A02G367000.1"/>
    <property type="gene ID" value="TraesCS3A02G367000"/>
</dbReference>
<dbReference type="EnsemblPlants" id="TraesCS3A03G0871600.1">
    <property type="protein sequence ID" value="TraesCS3A03G0871600.1.CDS"/>
    <property type="gene ID" value="TraesCS3A03G0871600"/>
</dbReference>
<dbReference type="EnsemblPlants" id="TraesJAG3A03G01473660.1">
    <property type="protein sequence ID" value="TraesJAG3A03G01473660.1"/>
    <property type="gene ID" value="TraesJAG3A03G01473660"/>
</dbReference>
<dbReference type="EnsemblPlants" id="TraesJUL3A03G01477390.1">
    <property type="protein sequence ID" value="TraesJUL3A03G01477390.1"/>
    <property type="gene ID" value="TraesJUL3A03G01477390"/>
</dbReference>
<dbReference type="EnsemblPlants" id="TraesKAR3A01G0377860.1">
    <property type="protein sequence ID" value="cds.TraesKAR3A01G0377860.1"/>
    <property type="gene ID" value="TraesKAR3A01G0377860"/>
</dbReference>
<dbReference type="EnsemblPlants" id="TraesLAC3A03G01408850.1">
    <property type="protein sequence ID" value="TraesLAC3A03G01408850.1"/>
    <property type="gene ID" value="TraesLAC3A03G01408850"/>
</dbReference>
<dbReference type="EnsemblPlants" id="TraesLDM3A03G01465520.1">
    <property type="protein sequence ID" value="TraesLDM3A03G01465520.1"/>
    <property type="gene ID" value="TraesLDM3A03G01465520"/>
</dbReference>
<dbReference type="EnsemblPlants" id="TraesMAC3A03G01462990.1">
    <property type="protein sequence ID" value="TraesMAC3A03G01462990.1"/>
    <property type="gene ID" value="TraesMAC3A03G01462990"/>
</dbReference>
<dbReference type="EnsemblPlants" id="TraesNOR3A03G01485760.1">
    <property type="protein sequence ID" value="TraesNOR3A03G01485760.1"/>
    <property type="gene ID" value="TraesNOR3A03G01485760"/>
</dbReference>
<dbReference type="EnsemblPlants" id="TraesPARA_EIv1.0_0853990.1">
    <property type="protein sequence ID" value="TraesPARA_EIv1.0_0853990.1.CDS"/>
    <property type="gene ID" value="TraesPARA_EIv1.0_0853990"/>
</dbReference>
<dbReference type="EnsemblPlants" id="TraesRN3A0100890300.1">
    <property type="protein sequence ID" value="TraesRN3A0100890300.1"/>
    <property type="gene ID" value="TraesRN3A0100890300"/>
</dbReference>
<dbReference type="EnsemblPlants" id="TraesROB_scaffold_038030_01G000100.1">
    <property type="protein sequence ID" value="TraesROB_scaffold_038030_01G000100.1"/>
    <property type="gene ID" value="TraesROB_scaffold_038030_01G000100"/>
</dbReference>
<dbReference type="EnsemblPlants" id="TraesSTA3A03G01456450.2">
    <property type="protein sequence ID" value="TraesSTA3A03G01456450.2"/>
    <property type="gene ID" value="TraesSTA3A03G01456450"/>
</dbReference>
<dbReference type="EnsemblPlants" id="TraesSYM3A03G01487640.1">
    <property type="protein sequence ID" value="TraesSYM3A03G01487640.1"/>
    <property type="gene ID" value="TraesSYM3A03G01487640"/>
</dbReference>
<dbReference type="EnsemblPlants" id="TraesWEE_scaffold_038090_01G000100.1">
    <property type="protein sequence ID" value="TraesWEE_scaffold_038090_01G000100.1"/>
    <property type="gene ID" value="TraesWEE_scaffold_038090_01G000100"/>
</dbReference>
<dbReference type="GeneID" id="123062621"/>
<dbReference type="Gramene" id="TraesARI3A03G01486520.1">
    <property type="protein sequence ID" value="TraesARI3A03G01486520.1"/>
    <property type="gene ID" value="TraesARI3A03G01486520"/>
</dbReference>
<dbReference type="Gramene" id="TraesCAD_scaffold_001683_01G000100.1">
    <property type="protein sequence ID" value="TraesCAD_scaffold_001683_01G000100.1"/>
    <property type="gene ID" value="TraesCAD_scaffold_001683_01G000100"/>
</dbReference>
<dbReference type="Gramene" id="TraesCLE_scaffold_029103_01G000100.1">
    <property type="protein sequence ID" value="TraesCLE_scaffold_029103_01G000100.1"/>
    <property type="gene ID" value="TraesCLE_scaffold_029103_01G000100"/>
</dbReference>
<dbReference type="Gramene" id="TraesCS3A02G367000.1">
    <property type="protein sequence ID" value="TraesCS3A02G367000.1"/>
    <property type="gene ID" value="TraesCS3A02G367000"/>
</dbReference>
<dbReference type="Gramene" id="TraesCS3A03G0871600.1">
    <property type="protein sequence ID" value="TraesCS3A03G0871600.1.CDS"/>
    <property type="gene ID" value="TraesCS3A03G0871600"/>
</dbReference>
<dbReference type="Gramene" id="TraesJAG3A03G01473660.1">
    <property type="protein sequence ID" value="TraesJAG3A03G01473660.1"/>
    <property type="gene ID" value="TraesJAG3A03G01473660"/>
</dbReference>
<dbReference type="Gramene" id="TraesJUL3A03G01477390.1">
    <property type="protein sequence ID" value="TraesJUL3A03G01477390.1"/>
    <property type="gene ID" value="TraesJUL3A03G01477390"/>
</dbReference>
<dbReference type="Gramene" id="TraesKAR3A01G0377860.1">
    <property type="protein sequence ID" value="cds.TraesKAR3A01G0377860.1"/>
    <property type="gene ID" value="TraesKAR3A01G0377860"/>
</dbReference>
<dbReference type="Gramene" id="TraesLAC3A03G01408850.1">
    <property type="protein sequence ID" value="TraesLAC3A03G01408850.1"/>
    <property type="gene ID" value="TraesLAC3A03G01408850"/>
</dbReference>
<dbReference type="Gramene" id="TraesLDM3A03G01465520.1">
    <property type="protein sequence ID" value="TraesLDM3A03G01465520.1"/>
    <property type="gene ID" value="TraesLDM3A03G01465520"/>
</dbReference>
<dbReference type="Gramene" id="TraesMAC3A03G01462990.1">
    <property type="protein sequence ID" value="TraesMAC3A03G01462990.1"/>
    <property type="gene ID" value="TraesMAC3A03G01462990"/>
</dbReference>
<dbReference type="Gramene" id="TraesNOR3A03G01485760.1">
    <property type="protein sequence ID" value="TraesNOR3A03G01485760.1"/>
    <property type="gene ID" value="TraesNOR3A03G01485760"/>
</dbReference>
<dbReference type="Gramene" id="TraesPARA_EIv1.0_0853990.1">
    <property type="protein sequence ID" value="TraesPARA_EIv1.0_0853990.1.CDS"/>
    <property type="gene ID" value="TraesPARA_EIv1.0_0853990"/>
</dbReference>
<dbReference type="Gramene" id="TraesRN3A0100890300.1">
    <property type="protein sequence ID" value="TraesRN3A0100890300.1"/>
    <property type="gene ID" value="TraesRN3A0100890300"/>
</dbReference>
<dbReference type="Gramene" id="TraesROB_scaffold_038030_01G000100.1">
    <property type="protein sequence ID" value="TraesROB_scaffold_038030_01G000100.1"/>
    <property type="gene ID" value="TraesROB_scaffold_038030_01G000100"/>
</dbReference>
<dbReference type="Gramene" id="TraesSTA3A03G01456450.2">
    <property type="protein sequence ID" value="TraesSTA3A03G01456450.2"/>
    <property type="gene ID" value="TraesSTA3A03G01456450"/>
</dbReference>
<dbReference type="Gramene" id="TraesSYM3A03G01487640.1">
    <property type="protein sequence ID" value="TraesSYM3A03G01487640.1"/>
    <property type="gene ID" value="TraesSYM3A03G01487640"/>
</dbReference>
<dbReference type="Gramene" id="TraesWEE_scaffold_038090_01G000100.1">
    <property type="protein sequence ID" value="TraesWEE_scaffold_038090_01G000100.1"/>
    <property type="gene ID" value="TraesWEE_scaffold_038090_01G000100"/>
</dbReference>
<dbReference type="eggNOG" id="KOG1458">
    <property type="taxonomic scope" value="Eukaryota"/>
</dbReference>
<dbReference type="OMA" id="NPCKLRY"/>
<dbReference type="SABIO-RK" id="P46285"/>
<dbReference type="UniPathway" id="UPA00116"/>
<dbReference type="Proteomes" id="UP000019116">
    <property type="component" value="Chromosome 3A"/>
</dbReference>
<dbReference type="GO" id="GO:0009507">
    <property type="term" value="C:chloroplast"/>
    <property type="evidence" value="ECO:0007669"/>
    <property type="project" value="UniProtKB-SubCell"/>
</dbReference>
<dbReference type="GO" id="GO:0005737">
    <property type="term" value="C:cytoplasm"/>
    <property type="evidence" value="ECO:0000318"/>
    <property type="project" value="GO_Central"/>
</dbReference>
<dbReference type="GO" id="GO:0042132">
    <property type="term" value="F:fructose 1,6-bisphosphate 1-phosphatase activity"/>
    <property type="evidence" value="ECO:0000318"/>
    <property type="project" value="GO_Central"/>
</dbReference>
<dbReference type="GO" id="GO:0046872">
    <property type="term" value="F:metal ion binding"/>
    <property type="evidence" value="ECO:0007669"/>
    <property type="project" value="UniProtKB-KW"/>
</dbReference>
<dbReference type="GO" id="GO:0050278">
    <property type="term" value="F:sedoheptulose-bisphosphatase activity"/>
    <property type="evidence" value="ECO:0007669"/>
    <property type="project" value="UniProtKB-EC"/>
</dbReference>
<dbReference type="GO" id="GO:0030388">
    <property type="term" value="P:fructose 1,6-bisphosphate metabolic process"/>
    <property type="evidence" value="ECO:0000318"/>
    <property type="project" value="GO_Central"/>
</dbReference>
<dbReference type="GO" id="GO:0006002">
    <property type="term" value="P:fructose 6-phosphate metabolic process"/>
    <property type="evidence" value="ECO:0000318"/>
    <property type="project" value="GO_Central"/>
</dbReference>
<dbReference type="GO" id="GO:0006000">
    <property type="term" value="P:fructose metabolic process"/>
    <property type="evidence" value="ECO:0000318"/>
    <property type="project" value="GO_Central"/>
</dbReference>
<dbReference type="GO" id="GO:0006094">
    <property type="term" value="P:gluconeogenesis"/>
    <property type="evidence" value="ECO:0000318"/>
    <property type="project" value="GO_Central"/>
</dbReference>
<dbReference type="GO" id="GO:0019253">
    <property type="term" value="P:reductive pentose-phosphate cycle"/>
    <property type="evidence" value="ECO:0007669"/>
    <property type="project" value="UniProtKB-UniPathway"/>
</dbReference>
<dbReference type="CDD" id="cd00354">
    <property type="entry name" value="FBPase"/>
    <property type="match status" value="1"/>
</dbReference>
<dbReference type="FunFam" id="3.30.540.10:FF:000010">
    <property type="entry name" value="Sedoheptulose-1,7-bisphosphatase, chloroplastic"/>
    <property type="match status" value="1"/>
</dbReference>
<dbReference type="FunFam" id="3.40.190.80:FF:000008">
    <property type="entry name" value="Sedoheptulose-1,7-bisphosphatase, chloroplastic"/>
    <property type="match status" value="1"/>
</dbReference>
<dbReference type="Gene3D" id="3.40.190.80">
    <property type="match status" value="1"/>
</dbReference>
<dbReference type="Gene3D" id="3.30.540.10">
    <property type="entry name" value="Fructose-1,6-Bisphosphatase, subunit A, domain 1"/>
    <property type="match status" value="1"/>
</dbReference>
<dbReference type="HAMAP" id="MF_01855">
    <property type="entry name" value="FBPase_class1"/>
    <property type="match status" value="1"/>
</dbReference>
<dbReference type="InterPro" id="IPR044015">
    <property type="entry name" value="FBPase_C_dom"/>
</dbReference>
<dbReference type="InterPro" id="IPR000146">
    <property type="entry name" value="FBPase_class-1"/>
</dbReference>
<dbReference type="InterPro" id="IPR033391">
    <property type="entry name" value="FBPase_N"/>
</dbReference>
<dbReference type="InterPro" id="IPR020548">
    <property type="entry name" value="Fructose_bisphosphatase_AS"/>
</dbReference>
<dbReference type="InterPro" id="IPR023079">
    <property type="entry name" value="SBPase"/>
</dbReference>
<dbReference type="PANTHER" id="PTHR11556">
    <property type="entry name" value="FRUCTOSE-1,6-BISPHOSPHATASE-RELATED"/>
    <property type="match status" value="1"/>
</dbReference>
<dbReference type="PANTHER" id="PTHR11556:SF35">
    <property type="entry name" value="SEDOHEPTULOSE-1,7-BISPHOSPHATASE, CHLOROPLASTIC"/>
    <property type="match status" value="1"/>
</dbReference>
<dbReference type="Pfam" id="PF00316">
    <property type="entry name" value="FBPase"/>
    <property type="match status" value="1"/>
</dbReference>
<dbReference type="Pfam" id="PF18913">
    <property type="entry name" value="FBPase_C"/>
    <property type="match status" value="1"/>
</dbReference>
<dbReference type="PRINTS" id="PR01958">
    <property type="entry name" value="S17BPHPHTASE"/>
</dbReference>
<dbReference type="SUPFAM" id="SSF56655">
    <property type="entry name" value="Carbohydrate phosphatase"/>
    <property type="match status" value="1"/>
</dbReference>
<dbReference type="PROSITE" id="PS00124">
    <property type="entry name" value="FBPASE"/>
    <property type="match status" value="1"/>
</dbReference>
<accession>P46285</accession>
<comment type="catalytic activity">
    <reaction>
        <text>D-sedoheptulose 1,7-bisphosphate + H2O = D-sedoheptulose 7-phosphate + phosphate</text>
        <dbReference type="Rhea" id="RHEA:17461"/>
        <dbReference type="ChEBI" id="CHEBI:15377"/>
        <dbReference type="ChEBI" id="CHEBI:43474"/>
        <dbReference type="ChEBI" id="CHEBI:57483"/>
        <dbReference type="ChEBI" id="CHEBI:58335"/>
        <dbReference type="EC" id="3.1.3.37"/>
    </reaction>
</comment>
<comment type="cofactor">
    <cofactor evidence="2">
        <name>Mg(2+)</name>
        <dbReference type="ChEBI" id="CHEBI:18420"/>
    </cofactor>
    <text evidence="2">Binds 3 Mg(2+) ions per subunit.</text>
</comment>
<comment type="pathway">
    <text>Carbohydrate biosynthesis; Calvin cycle.</text>
</comment>
<comment type="subunit">
    <text>Homodimer.</text>
</comment>
<comment type="subcellular location">
    <subcellularLocation>
        <location>Plastid</location>
        <location>Chloroplast</location>
    </subcellularLocation>
</comment>
<comment type="induction">
    <text>Light activation through pH changes, Mg(2+) levels and also by light-modulated reduction of essential disulfide groups via the ferredoxin-thioredoxin f system. In etiolated seedlings, induction occurs only after 4 hours of illumination.</text>
</comment>
<comment type="similarity">
    <text evidence="2">Belongs to the FBPase class 1 family.</text>
</comment>
<evidence type="ECO:0000255" key="1"/>
<evidence type="ECO:0000305" key="2"/>
<feature type="transit peptide" description="Chloroplast" evidence="1">
    <location>
        <begin position="1"/>
        <end status="unknown"/>
    </location>
</feature>
<feature type="chain" id="PRO_0000008824" description="Sedoheptulose-1,7-bisphosphatase, chloroplastic">
    <location>
        <begin status="unknown"/>
        <end position="393"/>
    </location>
</feature>
<feature type="binding site" evidence="1">
    <location>
        <position position="126"/>
    </location>
    <ligand>
        <name>Mg(2+)</name>
        <dbReference type="ChEBI" id="CHEBI:18420"/>
        <label>1</label>
    </ligand>
</feature>
<feature type="binding site" evidence="1">
    <location>
        <position position="155"/>
    </location>
    <ligand>
        <name>Mg(2+)</name>
        <dbReference type="ChEBI" id="CHEBI:18420"/>
        <label>1</label>
    </ligand>
</feature>
<feature type="binding site" evidence="1">
    <location>
        <position position="155"/>
    </location>
    <ligand>
        <name>Mg(2+)</name>
        <dbReference type="ChEBI" id="CHEBI:18420"/>
        <label>2</label>
    </ligand>
</feature>
<feature type="binding site" evidence="1">
    <location>
        <position position="176"/>
    </location>
    <ligand>
        <name>Mg(2+)</name>
        <dbReference type="ChEBI" id="CHEBI:18420"/>
        <label>2</label>
    </ligand>
</feature>
<feature type="binding site" evidence="1">
    <location>
        <position position="176"/>
    </location>
    <ligand>
        <name>Mg(2+)</name>
        <dbReference type="ChEBI" id="CHEBI:18420"/>
        <label>3</label>
    </ligand>
</feature>
<feature type="binding site" evidence="1">
    <location>
        <position position="178"/>
    </location>
    <ligand>
        <name>Mg(2+)</name>
        <dbReference type="ChEBI" id="CHEBI:18420"/>
        <label>2</label>
    </ligand>
</feature>
<feature type="binding site" evidence="1">
    <location>
        <begin position="179"/>
        <end position="182"/>
    </location>
    <ligand>
        <name>substrate</name>
    </ligand>
</feature>
<feature type="binding site" evidence="1">
    <location>
        <position position="179"/>
    </location>
    <ligand>
        <name>Mg(2+)</name>
        <dbReference type="ChEBI" id="CHEBI:18420"/>
        <label>3</label>
    </ligand>
</feature>
<feature type="binding site" evidence="1">
    <location>
        <position position="290"/>
    </location>
    <ligand>
        <name>substrate</name>
    </ligand>
</feature>
<feature type="binding site" evidence="1">
    <location>
        <position position="320"/>
    </location>
    <ligand>
        <name>substrate</name>
    </ligand>
</feature>
<feature type="binding site" evidence="1">
    <location>
        <position position="326"/>
    </location>
    <ligand>
        <name>Mg(2+)</name>
        <dbReference type="ChEBI" id="CHEBI:18420"/>
        <label>3</label>
    </ligand>
</feature>
<feature type="disulfide bond" description="Redox-active (light-modulated)" evidence="1">
    <location>
        <begin position="115"/>
        <end position="120"/>
    </location>
</feature>